<evidence type="ECO:0000255" key="1">
    <source>
        <dbReference type="HAMAP-Rule" id="MF_00536"/>
    </source>
</evidence>
<keyword id="KW-0170">Cobalt</keyword>
<keyword id="KW-0963">Cytoplasm</keyword>
<keyword id="KW-0460">Magnesium</keyword>
<keyword id="KW-0479">Metal-binding</keyword>
<keyword id="KW-0520">NAD</keyword>
<keyword id="KW-0521">NADP</keyword>
<keyword id="KW-0560">Oxidoreductase</keyword>
<keyword id="KW-0664">Pyridoxine biosynthesis</keyword>
<keyword id="KW-0862">Zinc</keyword>
<organism>
    <name type="scientific">Xanthomonas campestris pv. campestris (strain B100)</name>
    <dbReference type="NCBI Taxonomy" id="509169"/>
    <lineage>
        <taxon>Bacteria</taxon>
        <taxon>Pseudomonadati</taxon>
        <taxon>Pseudomonadota</taxon>
        <taxon>Gammaproteobacteria</taxon>
        <taxon>Lysobacterales</taxon>
        <taxon>Lysobacteraceae</taxon>
        <taxon>Xanthomonas</taxon>
    </lineage>
</organism>
<comment type="function">
    <text evidence="1">Catalyzes the NAD(P)-dependent oxidation of 4-(phosphooxy)-L-threonine (HTP) into 2-amino-3-oxo-4-(phosphooxy)butyric acid which spontaneously decarboxylates to form 3-amino-2-oxopropyl phosphate (AHAP).</text>
</comment>
<comment type="catalytic activity">
    <reaction evidence="1">
        <text>4-(phosphooxy)-L-threonine + NAD(+) = 3-amino-2-oxopropyl phosphate + CO2 + NADH</text>
        <dbReference type="Rhea" id="RHEA:32275"/>
        <dbReference type="ChEBI" id="CHEBI:16526"/>
        <dbReference type="ChEBI" id="CHEBI:57279"/>
        <dbReference type="ChEBI" id="CHEBI:57540"/>
        <dbReference type="ChEBI" id="CHEBI:57945"/>
        <dbReference type="ChEBI" id="CHEBI:58452"/>
        <dbReference type="EC" id="1.1.1.262"/>
    </reaction>
</comment>
<comment type="cofactor">
    <cofactor evidence="1">
        <name>Zn(2+)</name>
        <dbReference type="ChEBI" id="CHEBI:29105"/>
    </cofactor>
    <cofactor evidence="1">
        <name>Mg(2+)</name>
        <dbReference type="ChEBI" id="CHEBI:18420"/>
    </cofactor>
    <cofactor evidence="1">
        <name>Co(2+)</name>
        <dbReference type="ChEBI" id="CHEBI:48828"/>
    </cofactor>
    <text evidence="1">Binds 1 divalent metal cation per subunit. Can use ions such as Zn(2+), Mg(2+) or Co(2+).</text>
</comment>
<comment type="pathway">
    <text evidence="1">Cofactor biosynthesis; pyridoxine 5'-phosphate biosynthesis; pyridoxine 5'-phosphate from D-erythrose 4-phosphate: step 4/5.</text>
</comment>
<comment type="subunit">
    <text evidence="1">Homodimer.</text>
</comment>
<comment type="subcellular location">
    <subcellularLocation>
        <location evidence="1">Cytoplasm</location>
    </subcellularLocation>
</comment>
<comment type="miscellaneous">
    <text evidence="1">The active site is located at the dimer interface.</text>
</comment>
<comment type="similarity">
    <text evidence="1">Belongs to the PdxA family.</text>
</comment>
<reference key="1">
    <citation type="journal article" date="2008" name="J. Biotechnol.">
        <title>The genome of Xanthomonas campestris pv. campestris B100 and its use for the reconstruction of metabolic pathways involved in xanthan biosynthesis.</title>
        <authorList>
            <person name="Vorhoelter F.-J."/>
            <person name="Schneiker S."/>
            <person name="Goesmann A."/>
            <person name="Krause L."/>
            <person name="Bekel T."/>
            <person name="Kaiser O."/>
            <person name="Linke B."/>
            <person name="Patschkowski T."/>
            <person name="Rueckert C."/>
            <person name="Schmid J."/>
            <person name="Sidhu V.K."/>
            <person name="Sieber V."/>
            <person name="Tauch A."/>
            <person name="Watt S.A."/>
            <person name="Weisshaar B."/>
            <person name="Becker A."/>
            <person name="Niehaus K."/>
            <person name="Puehler A."/>
        </authorList>
    </citation>
    <scope>NUCLEOTIDE SEQUENCE [LARGE SCALE GENOMIC DNA]</scope>
    <source>
        <strain>B100</strain>
    </source>
</reference>
<name>PDXA_XANCB</name>
<gene>
    <name evidence="1" type="primary">pdxA</name>
    <name type="ordered locus">xcc-b100_3559</name>
</gene>
<dbReference type="EC" id="1.1.1.262" evidence="1"/>
<dbReference type="EMBL" id="AM920689">
    <property type="protein sequence ID" value="CAP52924.1"/>
    <property type="molecule type" value="Genomic_DNA"/>
</dbReference>
<dbReference type="SMR" id="B0RUI2"/>
<dbReference type="KEGG" id="xca:xcc-b100_3559"/>
<dbReference type="HOGENOM" id="CLU_040168_1_0_6"/>
<dbReference type="UniPathway" id="UPA00244">
    <property type="reaction ID" value="UER00312"/>
</dbReference>
<dbReference type="Proteomes" id="UP000001188">
    <property type="component" value="Chromosome"/>
</dbReference>
<dbReference type="GO" id="GO:0005737">
    <property type="term" value="C:cytoplasm"/>
    <property type="evidence" value="ECO:0007669"/>
    <property type="project" value="UniProtKB-SubCell"/>
</dbReference>
<dbReference type="GO" id="GO:0050570">
    <property type="term" value="F:4-hydroxythreonine-4-phosphate dehydrogenase activity"/>
    <property type="evidence" value="ECO:0007669"/>
    <property type="project" value="UniProtKB-UniRule"/>
</dbReference>
<dbReference type="GO" id="GO:0050897">
    <property type="term" value="F:cobalt ion binding"/>
    <property type="evidence" value="ECO:0007669"/>
    <property type="project" value="UniProtKB-UniRule"/>
</dbReference>
<dbReference type="GO" id="GO:0000287">
    <property type="term" value="F:magnesium ion binding"/>
    <property type="evidence" value="ECO:0007669"/>
    <property type="project" value="UniProtKB-UniRule"/>
</dbReference>
<dbReference type="GO" id="GO:0051287">
    <property type="term" value="F:NAD binding"/>
    <property type="evidence" value="ECO:0007669"/>
    <property type="project" value="InterPro"/>
</dbReference>
<dbReference type="GO" id="GO:0008270">
    <property type="term" value="F:zinc ion binding"/>
    <property type="evidence" value="ECO:0007669"/>
    <property type="project" value="UniProtKB-UniRule"/>
</dbReference>
<dbReference type="GO" id="GO:0042823">
    <property type="term" value="P:pyridoxal phosphate biosynthetic process"/>
    <property type="evidence" value="ECO:0007669"/>
    <property type="project" value="UniProtKB-UniRule"/>
</dbReference>
<dbReference type="GO" id="GO:0008615">
    <property type="term" value="P:pyridoxine biosynthetic process"/>
    <property type="evidence" value="ECO:0007669"/>
    <property type="project" value="UniProtKB-UniRule"/>
</dbReference>
<dbReference type="Gene3D" id="3.40.718.10">
    <property type="entry name" value="Isopropylmalate Dehydrogenase"/>
    <property type="match status" value="1"/>
</dbReference>
<dbReference type="HAMAP" id="MF_00536">
    <property type="entry name" value="PdxA"/>
    <property type="match status" value="1"/>
</dbReference>
<dbReference type="InterPro" id="IPR037510">
    <property type="entry name" value="PdxA"/>
</dbReference>
<dbReference type="InterPro" id="IPR005255">
    <property type="entry name" value="PdxA_fam"/>
</dbReference>
<dbReference type="NCBIfam" id="TIGR00557">
    <property type="entry name" value="pdxA"/>
    <property type="match status" value="1"/>
</dbReference>
<dbReference type="PANTHER" id="PTHR30004">
    <property type="entry name" value="4-HYDROXYTHREONINE-4-PHOSPHATE DEHYDROGENASE"/>
    <property type="match status" value="1"/>
</dbReference>
<dbReference type="PANTHER" id="PTHR30004:SF5">
    <property type="entry name" value="4-HYDROXYTHREONINE-4-PHOSPHATE DEHYDROGENASE"/>
    <property type="match status" value="1"/>
</dbReference>
<dbReference type="Pfam" id="PF04166">
    <property type="entry name" value="PdxA"/>
    <property type="match status" value="1"/>
</dbReference>
<dbReference type="SUPFAM" id="SSF53659">
    <property type="entry name" value="Isocitrate/Isopropylmalate dehydrogenase-like"/>
    <property type="match status" value="1"/>
</dbReference>
<proteinExistence type="inferred from homology"/>
<protein>
    <recommendedName>
        <fullName evidence="1">4-hydroxythreonine-4-phosphate dehydrogenase</fullName>
        <ecNumber evidence="1">1.1.1.262</ecNumber>
    </recommendedName>
    <alternativeName>
        <fullName evidence="1">4-(phosphohydroxy)-L-threonine dehydrogenase</fullName>
    </alternativeName>
</protein>
<accession>B0RUI2</accession>
<feature type="chain" id="PRO_1000128265" description="4-hydroxythreonine-4-phosphate dehydrogenase">
    <location>
        <begin position="1"/>
        <end position="322"/>
    </location>
</feature>
<feature type="binding site" evidence="1">
    <location>
        <position position="132"/>
    </location>
    <ligand>
        <name>substrate</name>
    </ligand>
</feature>
<feature type="binding site" evidence="1">
    <location>
        <position position="160"/>
    </location>
    <ligand>
        <name>a divalent metal cation</name>
        <dbReference type="ChEBI" id="CHEBI:60240"/>
        <note>ligand shared between dimeric partners</note>
    </ligand>
</feature>
<feature type="binding site" evidence="1">
    <location>
        <position position="205"/>
    </location>
    <ligand>
        <name>a divalent metal cation</name>
        <dbReference type="ChEBI" id="CHEBI:60240"/>
        <note>ligand shared between dimeric partners</note>
    </ligand>
</feature>
<feature type="binding site" evidence="1">
    <location>
        <position position="260"/>
    </location>
    <ligand>
        <name>a divalent metal cation</name>
        <dbReference type="ChEBI" id="CHEBI:60240"/>
        <note>ligand shared between dimeric partners</note>
    </ligand>
</feature>
<feature type="binding site" evidence="1">
    <location>
        <position position="268"/>
    </location>
    <ligand>
        <name>substrate</name>
    </ligand>
</feature>
<feature type="binding site" evidence="1">
    <location>
        <position position="277"/>
    </location>
    <ligand>
        <name>substrate</name>
    </ligand>
</feature>
<feature type="binding site" evidence="1">
    <location>
        <position position="286"/>
    </location>
    <ligand>
        <name>substrate</name>
    </ligand>
</feature>
<sequence length="322" mass="33447">MVPSLALVPGEPAGIGPELCIRLAQQPRSDAHLIVYADPDTLHSAAKALCLSVRLLDPDQPARLPGDLPLHPIRQAAPTRFGTPDPANAAAVIAGLLGAAGDCLSGKLQGIVTGPVHKAVINAGGIAYTGTTELLAAQAGCPVVMMLANSIVRVALVTTHLPLRAVPEAITAEALARCLRITATAMQRDFGLEHPRIAVLGLNPHAGEDGLLGREELDVIIPVLDQLRSEGMQLIGPLPADTAFLPQKLTDFDAVVAMYHDQGLPVLKYSGFEQAVNITLGLPYPRVAVDHGTALELAGRGVADPSSLLAATALCARLAARS</sequence>